<sequence>AIAAVITFLILFTIFGNALVILAVLTSRSLRAPQNLFLVSLAAADILVATLIIPFSLANELLGYWYFRRTWCEVYLALDVLFCTSSIVHLCAISLDRYWAVSRALQYNSKRTPRRIKCVILTVWLIAAAISLPPLIYKGDQGPQPRGRPQCKLNQEAWYILSSSIGSFFAPCLIMILVYLRIYLIAKRSNRRGPRAKGAPREGEPKQPHPLPAGPSALANSPTLASSLAVTGEANGHSEPPGEKERETPEDPGTLTLPPSWPVLPNSGQGQKEGVCGASPEEEEECGSPAVPASPALACSPPLQQPKGSRVLATLRGQVLLGRGVGTAGGQWWRRRAQLTREKRFTFVLAVVIGVFVLCWFPFFFSYSLGAICPQHCKVPHGLF</sequence>
<gene>
    <name type="primary">ADRA2B</name>
</gene>
<dbReference type="EMBL" id="Y12525">
    <property type="protein sequence ID" value="CAA73125.1"/>
    <property type="molecule type" value="Genomic_DNA"/>
</dbReference>
<dbReference type="SMR" id="O19014"/>
<dbReference type="GO" id="GO:0009986">
    <property type="term" value="C:cell surface"/>
    <property type="evidence" value="ECO:0000250"/>
    <property type="project" value="UniProtKB"/>
</dbReference>
<dbReference type="GO" id="GO:0005886">
    <property type="term" value="C:plasma membrane"/>
    <property type="evidence" value="ECO:0007669"/>
    <property type="project" value="UniProtKB-SubCell"/>
</dbReference>
<dbReference type="GO" id="GO:0004938">
    <property type="term" value="F:alpha2-adrenergic receptor activity"/>
    <property type="evidence" value="ECO:0007669"/>
    <property type="project" value="InterPro"/>
</dbReference>
<dbReference type="GO" id="GO:0051379">
    <property type="term" value="F:epinephrine binding"/>
    <property type="evidence" value="ECO:0007669"/>
    <property type="project" value="TreeGrafter"/>
</dbReference>
<dbReference type="GO" id="GO:0030168">
    <property type="term" value="P:platelet activation"/>
    <property type="evidence" value="ECO:0007669"/>
    <property type="project" value="InterPro"/>
</dbReference>
<dbReference type="GO" id="GO:0006940">
    <property type="term" value="P:regulation of smooth muscle contraction"/>
    <property type="evidence" value="ECO:0007669"/>
    <property type="project" value="InterPro"/>
</dbReference>
<dbReference type="GO" id="GO:0019229">
    <property type="term" value="P:regulation of vasoconstriction"/>
    <property type="evidence" value="ECO:0007669"/>
    <property type="project" value="InterPro"/>
</dbReference>
<dbReference type="CDD" id="cd15321">
    <property type="entry name" value="7tmA_alpha2B_AR"/>
    <property type="match status" value="1"/>
</dbReference>
<dbReference type="FunFam" id="1.20.1070.10:FF:000330">
    <property type="entry name" value="Alpha 2B adrenergic receptor"/>
    <property type="match status" value="1"/>
</dbReference>
<dbReference type="FunFam" id="1.20.1070.10:FF:000185">
    <property type="entry name" value="Alpha-2B adrenergic receptor"/>
    <property type="match status" value="1"/>
</dbReference>
<dbReference type="Gene3D" id="1.20.1070.10">
    <property type="entry name" value="Rhodopsin 7-helix transmembrane proteins"/>
    <property type="match status" value="2"/>
</dbReference>
<dbReference type="InterPro" id="IPR002233">
    <property type="entry name" value="ADR_fam"/>
</dbReference>
<dbReference type="InterPro" id="IPR000207">
    <property type="entry name" value="ADRA2B_rcpt"/>
</dbReference>
<dbReference type="InterPro" id="IPR000276">
    <property type="entry name" value="GPCR_Rhodpsn"/>
</dbReference>
<dbReference type="InterPro" id="IPR017452">
    <property type="entry name" value="GPCR_Rhodpsn_7TM"/>
</dbReference>
<dbReference type="PANTHER" id="PTHR24248">
    <property type="entry name" value="ADRENERGIC RECEPTOR-RELATED G-PROTEIN COUPLED RECEPTOR"/>
    <property type="match status" value="1"/>
</dbReference>
<dbReference type="PANTHER" id="PTHR24248:SF130">
    <property type="entry name" value="ALPHA-2B ADRENERGIC RECEPTOR"/>
    <property type="match status" value="1"/>
</dbReference>
<dbReference type="Pfam" id="PF00001">
    <property type="entry name" value="7tm_1"/>
    <property type="match status" value="1"/>
</dbReference>
<dbReference type="PRINTS" id="PR01103">
    <property type="entry name" value="ADRENERGICR"/>
</dbReference>
<dbReference type="PRINTS" id="PR00559">
    <property type="entry name" value="ADRENRGCA2BR"/>
</dbReference>
<dbReference type="PRINTS" id="PR00237">
    <property type="entry name" value="GPCRRHODOPSN"/>
</dbReference>
<dbReference type="SMART" id="SM01381">
    <property type="entry name" value="7TM_GPCR_Srsx"/>
    <property type="match status" value="1"/>
</dbReference>
<dbReference type="SUPFAM" id="SSF81321">
    <property type="entry name" value="Family A G protein-coupled receptor-like"/>
    <property type="match status" value="1"/>
</dbReference>
<dbReference type="PROSITE" id="PS00237">
    <property type="entry name" value="G_PROTEIN_RECEP_F1_1"/>
    <property type="match status" value="1"/>
</dbReference>
<dbReference type="PROSITE" id="PS50262">
    <property type="entry name" value="G_PROTEIN_RECEP_F1_2"/>
    <property type="match status" value="1"/>
</dbReference>
<protein>
    <recommendedName>
        <fullName>Alpha-2B adrenergic receptor</fullName>
    </recommendedName>
    <alternativeName>
        <fullName>Alpha-2B adrenoreceptor</fullName>
        <shortName>Alpha-2B adrenoceptor</shortName>
        <shortName>Alpha-2BAR</shortName>
    </alternativeName>
</protein>
<reference key="1">
    <citation type="journal article" date="1997" name="Nature">
        <title>Endemic African mammals shake the phylogenetic tree.</title>
        <authorList>
            <person name="Springer M.S."/>
            <person name="Cleven G.C."/>
            <person name="Madsen O.J."/>
            <person name="de Jong W.W."/>
            <person name="Waddell V.G."/>
            <person name="Amrine H.M."/>
            <person name="Stanhope M.J."/>
        </authorList>
    </citation>
    <scope>NUCLEOTIDE SEQUENCE [GENOMIC DNA]</scope>
</reference>
<evidence type="ECO:0000250" key="1"/>
<evidence type="ECO:0000250" key="2">
    <source>
        <dbReference type="UniProtKB" id="P18089"/>
    </source>
</evidence>
<evidence type="ECO:0000255" key="3">
    <source>
        <dbReference type="PROSITE-ProRule" id="PRU00521"/>
    </source>
</evidence>
<evidence type="ECO:0000256" key="4">
    <source>
        <dbReference type="SAM" id="MobiDB-lite"/>
    </source>
</evidence>
<proteinExistence type="inferred from homology"/>
<keyword id="KW-1003">Cell membrane</keyword>
<keyword id="KW-1015">Disulfide bond</keyword>
<keyword id="KW-0297">G-protein coupled receptor</keyword>
<keyword id="KW-0449">Lipoprotein</keyword>
<keyword id="KW-0472">Membrane</keyword>
<keyword id="KW-0564">Palmitate</keyword>
<keyword id="KW-0675">Receptor</keyword>
<keyword id="KW-0807">Transducer</keyword>
<keyword id="KW-0812">Transmembrane</keyword>
<keyword id="KW-1133">Transmembrane helix</keyword>
<comment type="function">
    <text>Alpha-2 adrenergic receptors mediate the catecholamine-induced inhibition of adenylate cyclase through the action of G proteins.</text>
</comment>
<comment type="subunit">
    <text evidence="2">Interacts with RAB26. Interacts with PPP1R9B. Interacts with GGA1, GGA2 and GGA3.</text>
</comment>
<comment type="subcellular location">
    <subcellularLocation>
        <location evidence="2">Cell membrane</location>
        <topology evidence="2">Multi-pass membrane protein</topology>
    </subcellularLocation>
    <text evidence="2">Interaction with RAB26, GGA1, GGA2 and GGA3 mediates transport from the Golgi to the cell membrane.</text>
</comment>
<comment type="similarity">
    <text evidence="3">Belongs to the G-protein coupled receptor 1 family. Adrenergic receptor subfamily. ADRA2B sub-subfamily.</text>
</comment>
<name>ADA2B_ELEMA</name>
<organism>
    <name type="scientific">Elephas maximus</name>
    <name type="common">Indian elephant</name>
    <dbReference type="NCBI Taxonomy" id="9783"/>
    <lineage>
        <taxon>Eukaryota</taxon>
        <taxon>Metazoa</taxon>
        <taxon>Chordata</taxon>
        <taxon>Craniata</taxon>
        <taxon>Vertebrata</taxon>
        <taxon>Euteleostomi</taxon>
        <taxon>Mammalia</taxon>
        <taxon>Eutheria</taxon>
        <taxon>Afrotheria</taxon>
        <taxon>Proboscidea</taxon>
        <taxon>Elephantidae</taxon>
        <taxon>Elephas</taxon>
    </lineage>
</organism>
<feature type="chain" id="PRO_0000069091" description="Alpha-2B adrenergic receptor">
    <location>
        <begin position="1" status="less than"/>
        <end position="384" status="greater than"/>
    </location>
</feature>
<feature type="transmembrane region" description="Helical; Name=1" evidence="1">
    <location>
        <begin position="1" status="less than"/>
        <end position="25"/>
    </location>
</feature>
<feature type="topological domain" description="Cytoplasmic" evidence="1">
    <location>
        <begin position="26"/>
        <end position="36"/>
    </location>
</feature>
<feature type="transmembrane region" description="Helical; Name=2" evidence="1">
    <location>
        <begin position="37"/>
        <end position="62"/>
    </location>
</feature>
<feature type="topological domain" description="Extracellular" evidence="1">
    <location>
        <begin position="63"/>
        <end position="72"/>
    </location>
</feature>
<feature type="transmembrane region" description="Helical; Name=3" evidence="1">
    <location>
        <begin position="73"/>
        <end position="95"/>
    </location>
</feature>
<feature type="topological domain" description="Cytoplasmic" evidence="1">
    <location>
        <begin position="96"/>
        <end position="117"/>
    </location>
</feature>
<feature type="transmembrane region" description="Helical; Name=4" evidence="1">
    <location>
        <begin position="118"/>
        <end position="140"/>
    </location>
</feature>
<feature type="topological domain" description="Extracellular" evidence="1">
    <location>
        <begin position="141"/>
        <end position="156"/>
    </location>
</feature>
<feature type="transmembrane region" description="Helical; Name=5" evidence="1">
    <location>
        <begin position="157"/>
        <end position="180"/>
    </location>
</feature>
<feature type="topological domain" description="Cytoplasmic" evidence="1">
    <location>
        <begin position="181"/>
        <end position="348"/>
    </location>
</feature>
<feature type="transmembrane region" description="Helical; Name=6" evidence="1">
    <location>
        <begin position="349"/>
        <end position="372"/>
    </location>
</feature>
<feature type="topological domain" description="Extracellular" evidence="1">
    <location>
        <begin position="373"/>
        <end position="381"/>
    </location>
</feature>
<feature type="transmembrane region" description="Helical; Name=7" evidence="1">
    <location>
        <begin position="382"/>
        <end position="384" status="greater than"/>
    </location>
</feature>
<feature type="region of interest" description="Disordered" evidence="4">
    <location>
        <begin position="192"/>
        <end position="289"/>
    </location>
</feature>
<feature type="compositionally biased region" description="Polar residues" evidence="4">
    <location>
        <begin position="218"/>
        <end position="229"/>
    </location>
</feature>
<feature type="compositionally biased region" description="Basic and acidic residues" evidence="4">
    <location>
        <begin position="240"/>
        <end position="249"/>
    </location>
</feature>
<feature type="site" description="Implicated in ligand binding" evidence="1">
    <location>
        <position position="79"/>
    </location>
</feature>
<feature type="site" description="Implicated in catechol agonist binding" evidence="1">
    <location>
        <position position="163"/>
    </location>
</feature>
<feature type="site" description="Implicated in catechol agonist binding" evidence="1">
    <location>
        <position position="167"/>
    </location>
</feature>
<feature type="disulfide bond" evidence="3">
    <location>
        <begin position="72"/>
        <end position="151"/>
    </location>
</feature>
<feature type="non-terminal residue">
    <location>
        <position position="1"/>
    </location>
</feature>
<feature type="non-terminal residue">
    <location>
        <position position="384"/>
    </location>
</feature>
<accession>O19014</accession>